<feature type="chain" id="PRO_0000261855" description="Glucose-1-phosphate adenylyltransferase">
    <location>
        <begin position="1"/>
        <end position="417"/>
    </location>
</feature>
<feature type="binding site" evidence="1">
    <location>
        <position position="98"/>
    </location>
    <ligand>
        <name>alpha-D-glucose 1-phosphate</name>
        <dbReference type="ChEBI" id="CHEBI:58601"/>
    </ligand>
</feature>
<feature type="binding site" evidence="1">
    <location>
        <position position="163"/>
    </location>
    <ligand>
        <name>alpha-D-glucose 1-phosphate</name>
        <dbReference type="ChEBI" id="CHEBI:58601"/>
    </ligand>
</feature>
<feature type="binding site" evidence="1">
    <location>
        <begin position="178"/>
        <end position="179"/>
    </location>
    <ligand>
        <name>alpha-D-glucose 1-phosphate</name>
        <dbReference type="ChEBI" id="CHEBI:58601"/>
    </ligand>
</feature>
<feature type="binding site" evidence="1">
    <location>
        <position position="197"/>
    </location>
    <ligand>
        <name>alpha-D-glucose 1-phosphate</name>
        <dbReference type="ChEBI" id="CHEBI:58601"/>
    </ligand>
</feature>
<dbReference type="EC" id="2.7.7.27" evidence="1"/>
<dbReference type="EMBL" id="CP000360">
    <property type="protein sequence ID" value="ABF40023.1"/>
    <property type="molecule type" value="Genomic_DNA"/>
</dbReference>
<dbReference type="RefSeq" id="WP_011521825.1">
    <property type="nucleotide sequence ID" value="NC_008009.1"/>
</dbReference>
<dbReference type="SMR" id="Q1ISX7"/>
<dbReference type="STRING" id="204669.Acid345_1020"/>
<dbReference type="EnsemblBacteria" id="ABF40023">
    <property type="protein sequence ID" value="ABF40023"/>
    <property type="gene ID" value="Acid345_1020"/>
</dbReference>
<dbReference type="KEGG" id="aba:Acid345_1020"/>
<dbReference type="eggNOG" id="COG0448">
    <property type="taxonomic scope" value="Bacteria"/>
</dbReference>
<dbReference type="HOGENOM" id="CLU_029499_14_1_0"/>
<dbReference type="OrthoDB" id="9801810at2"/>
<dbReference type="UniPathway" id="UPA00164"/>
<dbReference type="Proteomes" id="UP000002432">
    <property type="component" value="Chromosome"/>
</dbReference>
<dbReference type="GO" id="GO:0005524">
    <property type="term" value="F:ATP binding"/>
    <property type="evidence" value="ECO:0007669"/>
    <property type="project" value="UniProtKB-KW"/>
</dbReference>
<dbReference type="GO" id="GO:0008878">
    <property type="term" value="F:glucose-1-phosphate adenylyltransferase activity"/>
    <property type="evidence" value="ECO:0007669"/>
    <property type="project" value="UniProtKB-UniRule"/>
</dbReference>
<dbReference type="GO" id="GO:0005978">
    <property type="term" value="P:glycogen biosynthetic process"/>
    <property type="evidence" value="ECO:0007669"/>
    <property type="project" value="UniProtKB-UniRule"/>
</dbReference>
<dbReference type="CDD" id="cd02508">
    <property type="entry name" value="ADP_Glucose_PP"/>
    <property type="match status" value="1"/>
</dbReference>
<dbReference type="CDD" id="cd04651">
    <property type="entry name" value="LbH_G1P_AT_C"/>
    <property type="match status" value="1"/>
</dbReference>
<dbReference type="Gene3D" id="2.160.10.10">
    <property type="entry name" value="Hexapeptide repeat proteins"/>
    <property type="match status" value="1"/>
</dbReference>
<dbReference type="Gene3D" id="3.90.550.10">
    <property type="entry name" value="Spore Coat Polysaccharide Biosynthesis Protein SpsA, Chain A"/>
    <property type="match status" value="1"/>
</dbReference>
<dbReference type="HAMAP" id="MF_00624">
    <property type="entry name" value="GlgC"/>
    <property type="match status" value="1"/>
</dbReference>
<dbReference type="InterPro" id="IPR011831">
    <property type="entry name" value="ADP-Glc_PPase"/>
</dbReference>
<dbReference type="InterPro" id="IPR005836">
    <property type="entry name" value="ADP_Glu_pyroP_CS"/>
</dbReference>
<dbReference type="InterPro" id="IPR023049">
    <property type="entry name" value="GlgC_bac"/>
</dbReference>
<dbReference type="InterPro" id="IPR056818">
    <property type="entry name" value="GlmU/GlgC-like_hexapep"/>
</dbReference>
<dbReference type="InterPro" id="IPR005835">
    <property type="entry name" value="NTP_transferase_dom"/>
</dbReference>
<dbReference type="InterPro" id="IPR029044">
    <property type="entry name" value="Nucleotide-diphossugar_trans"/>
</dbReference>
<dbReference type="InterPro" id="IPR011004">
    <property type="entry name" value="Trimer_LpxA-like_sf"/>
</dbReference>
<dbReference type="NCBIfam" id="TIGR02091">
    <property type="entry name" value="glgC"/>
    <property type="match status" value="1"/>
</dbReference>
<dbReference type="NCBIfam" id="NF001947">
    <property type="entry name" value="PRK00725.1"/>
    <property type="match status" value="1"/>
</dbReference>
<dbReference type="NCBIfam" id="NF002023">
    <property type="entry name" value="PRK00844.1"/>
    <property type="match status" value="1"/>
</dbReference>
<dbReference type="PANTHER" id="PTHR43523:SF2">
    <property type="entry name" value="GLUCOSE-1-PHOSPHATE ADENYLYLTRANSFERASE"/>
    <property type="match status" value="1"/>
</dbReference>
<dbReference type="PANTHER" id="PTHR43523">
    <property type="entry name" value="GLUCOSE-1-PHOSPHATE ADENYLYLTRANSFERASE-RELATED"/>
    <property type="match status" value="1"/>
</dbReference>
<dbReference type="Pfam" id="PF24894">
    <property type="entry name" value="Hexapep_GlmU"/>
    <property type="match status" value="1"/>
</dbReference>
<dbReference type="Pfam" id="PF00483">
    <property type="entry name" value="NTP_transferase"/>
    <property type="match status" value="1"/>
</dbReference>
<dbReference type="SUPFAM" id="SSF53448">
    <property type="entry name" value="Nucleotide-diphospho-sugar transferases"/>
    <property type="match status" value="1"/>
</dbReference>
<dbReference type="SUPFAM" id="SSF51161">
    <property type="entry name" value="Trimeric LpxA-like enzymes"/>
    <property type="match status" value="1"/>
</dbReference>
<dbReference type="PROSITE" id="PS00809">
    <property type="entry name" value="ADP_GLC_PYROPHOSPH_2"/>
    <property type="match status" value="1"/>
</dbReference>
<dbReference type="PROSITE" id="PS00810">
    <property type="entry name" value="ADP_GLC_PYROPHOSPH_3"/>
    <property type="match status" value="1"/>
</dbReference>
<sequence length="417" mass="47089">MIETLGVLLAGGAGERLYPLTRDRAKPAVNFGGIYRIIDITLSNCINSGLRRVYILTQYKALSLNRHIREGWSGIVGNELGEFIEILPPMKRVSENWYMGTADAVYQNIYSIGSEQPRYVLILSGDHIYKMNYDLMMRQHKDSGADVTLATILIDPSETRHFGVVDVDNQSHVNGFVEKPKSTELRSPYDPSKVSASMGIYIFNTDVLIPVLLKDAEDPNSKHDFGHNILPKMVGEYKIYSFNFIDENKKEALYWRDVGTLDAYYDANLDLVSVAPVFNLYDKAWPIRTHQRQYPPAKFVFAEQGRMGTALDSVVSMGCIVSGGTVRNCVLSPDVRVNSFSEVDSSILFSHVNVGRHCRIRRSIIDRDVHIPEGTVIGYDTESDRQKYHVTDSGITVVTRDYSLFENPVEVDYFTSE</sequence>
<evidence type="ECO:0000255" key="1">
    <source>
        <dbReference type="HAMAP-Rule" id="MF_00624"/>
    </source>
</evidence>
<gene>
    <name evidence="1" type="primary">glgC</name>
    <name type="ordered locus">Acid345_1020</name>
</gene>
<accession>Q1ISX7</accession>
<reference key="1">
    <citation type="journal article" date="2009" name="Appl. Environ. Microbiol.">
        <title>Three genomes from the phylum Acidobacteria provide insight into the lifestyles of these microorganisms in soils.</title>
        <authorList>
            <person name="Ward N.L."/>
            <person name="Challacombe J.F."/>
            <person name="Janssen P.H."/>
            <person name="Henrissat B."/>
            <person name="Coutinho P.M."/>
            <person name="Wu M."/>
            <person name="Xie G."/>
            <person name="Haft D.H."/>
            <person name="Sait M."/>
            <person name="Badger J."/>
            <person name="Barabote R.D."/>
            <person name="Bradley B."/>
            <person name="Brettin T.S."/>
            <person name="Brinkac L.M."/>
            <person name="Bruce D."/>
            <person name="Creasy T."/>
            <person name="Daugherty S.C."/>
            <person name="Davidsen T.M."/>
            <person name="DeBoy R.T."/>
            <person name="Detter J.C."/>
            <person name="Dodson R.J."/>
            <person name="Durkin A.S."/>
            <person name="Ganapathy A."/>
            <person name="Gwinn-Giglio M."/>
            <person name="Han C.S."/>
            <person name="Khouri H."/>
            <person name="Kiss H."/>
            <person name="Kothari S.P."/>
            <person name="Madupu R."/>
            <person name="Nelson K.E."/>
            <person name="Nelson W.C."/>
            <person name="Paulsen I."/>
            <person name="Penn K."/>
            <person name="Ren Q."/>
            <person name="Rosovitz M.J."/>
            <person name="Selengut J.D."/>
            <person name="Shrivastava S."/>
            <person name="Sullivan S.A."/>
            <person name="Tapia R."/>
            <person name="Thompson L.S."/>
            <person name="Watkins K.L."/>
            <person name="Yang Q."/>
            <person name="Yu C."/>
            <person name="Zafar N."/>
            <person name="Zhou L."/>
            <person name="Kuske C.R."/>
        </authorList>
    </citation>
    <scope>NUCLEOTIDE SEQUENCE [LARGE SCALE GENOMIC DNA]</scope>
    <source>
        <strain>Ellin345</strain>
    </source>
</reference>
<name>GLGC_KORVE</name>
<comment type="function">
    <text evidence="1">Involved in the biosynthesis of ADP-glucose, a building block required for the elongation reactions to produce glycogen. Catalyzes the reaction between ATP and alpha-D-glucose 1-phosphate (G1P) to produce pyrophosphate and ADP-Glc.</text>
</comment>
<comment type="catalytic activity">
    <reaction evidence="1">
        <text>alpha-D-glucose 1-phosphate + ATP + H(+) = ADP-alpha-D-glucose + diphosphate</text>
        <dbReference type="Rhea" id="RHEA:12120"/>
        <dbReference type="ChEBI" id="CHEBI:15378"/>
        <dbReference type="ChEBI" id="CHEBI:30616"/>
        <dbReference type="ChEBI" id="CHEBI:33019"/>
        <dbReference type="ChEBI" id="CHEBI:57498"/>
        <dbReference type="ChEBI" id="CHEBI:58601"/>
        <dbReference type="EC" id="2.7.7.27"/>
    </reaction>
</comment>
<comment type="pathway">
    <text evidence="1">Glycan biosynthesis; glycogen biosynthesis.</text>
</comment>
<comment type="subunit">
    <text evidence="1">Homotetramer.</text>
</comment>
<comment type="similarity">
    <text evidence="1">Belongs to the bacterial/plant glucose-1-phosphate adenylyltransferase family.</text>
</comment>
<proteinExistence type="inferred from homology"/>
<protein>
    <recommendedName>
        <fullName evidence="1">Glucose-1-phosphate adenylyltransferase</fullName>
        <ecNumber evidence="1">2.7.7.27</ecNumber>
    </recommendedName>
    <alternativeName>
        <fullName evidence="1">ADP-glucose pyrophosphorylase</fullName>
        <shortName evidence="1">ADPGlc PPase</shortName>
    </alternativeName>
    <alternativeName>
        <fullName evidence="1">ADP-glucose synthase</fullName>
    </alternativeName>
</protein>
<organism>
    <name type="scientific">Koribacter versatilis (strain Ellin345)</name>
    <dbReference type="NCBI Taxonomy" id="204669"/>
    <lineage>
        <taxon>Bacteria</taxon>
        <taxon>Pseudomonadati</taxon>
        <taxon>Acidobacteriota</taxon>
        <taxon>Terriglobia</taxon>
        <taxon>Terriglobales</taxon>
        <taxon>Candidatus Korobacteraceae</taxon>
        <taxon>Candidatus Korobacter</taxon>
    </lineage>
</organism>
<keyword id="KW-0067">ATP-binding</keyword>
<keyword id="KW-0119">Carbohydrate metabolism</keyword>
<keyword id="KW-0320">Glycogen biosynthesis</keyword>
<keyword id="KW-0321">Glycogen metabolism</keyword>
<keyword id="KW-0547">Nucleotide-binding</keyword>
<keyword id="KW-0548">Nucleotidyltransferase</keyword>
<keyword id="KW-1185">Reference proteome</keyword>
<keyword id="KW-0808">Transferase</keyword>